<comment type="function">
    <text evidence="1">NQR complex catalyzes the reduction of ubiquinone-1 to ubiquinol by two successive reactions, coupled with the transport of Na(+) ions from the cytoplasm to the periplasm. NqrA to NqrE are probably involved in the second step, the conversion of ubisemiquinone to ubiquinol.</text>
</comment>
<comment type="catalytic activity">
    <reaction evidence="1">
        <text>a ubiquinone + n Na(+)(in) + NADH + H(+) = a ubiquinol + n Na(+)(out) + NAD(+)</text>
        <dbReference type="Rhea" id="RHEA:47748"/>
        <dbReference type="Rhea" id="RHEA-COMP:9565"/>
        <dbReference type="Rhea" id="RHEA-COMP:9566"/>
        <dbReference type="ChEBI" id="CHEBI:15378"/>
        <dbReference type="ChEBI" id="CHEBI:16389"/>
        <dbReference type="ChEBI" id="CHEBI:17976"/>
        <dbReference type="ChEBI" id="CHEBI:29101"/>
        <dbReference type="ChEBI" id="CHEBI:57540"/>
        <dbReference type="ChEBI" id="CHEBI:57945"/>
        <dbReference type="EC" id="7.2.1.1"/>
    </reaction>
</comment>
<comment type="subunit">
    <text evidence="1">Composed of six subunits; NqrA, NqrB, NqrC, NqrD, NqrE and NqrF.</text>
</comment>
<comment type="subcellular location">
    <subcellularLocation>
        <location evidence="1">Cell inner membrane</location>
        <topology evidence="1">Multi-pass membrane protein</topology>
    </subcellularLocation>
</comment>
<comment type="similarity">
    <text evidence="1">Belongs to the NqrDE/RnfAE family.</text>
</comment>
<evidence type="ECO:0000255" key="1">
    <source>
        <dbReference type="HAMAP-Rule" id="MF_00428"/>
    </source>
</evidence>
<organism>
    <name type="scientific">Vibrio campbellii (strain ATCC BAA-1116)</name>
    <dbReference type="NCBI Taxonomy" id="2902295"/>
    <lineage>
        <taxon>Bacteria</taxon>
        <taxon>Pseudomonadati</taxon>
        <taxon>Pseudomonadota</taxon>
        <taxon>Gammaproteobacteria</taxon>
        <taxon>Vibrionales</taxon>
        <taxon>Vibrionaceae</taxon>
        <taxon>Vibrio</taxon>
    </lineage>
</organism>
<accession>Q9RFV8</accession>
<accession>A7N1U3</accession>
<dbReference type="EC" id="7.2.1.1" evidence="1"/>
<dbReference type="EMBL" id="AF165980">
    <property type="protein sequence ID" value="AAF15414.1"/>
    <property type="molecule type" value="Genomic_DNA"/>
</dbReference>
<dbReference type="EMBL" id="CP000789">
    <property type="protein sequence ID" value="ABU72220.1"/>
    <property type="molecule type" value="Genomic_DNA"/>
</dbReference>
<dbReference type="RefSeq" id="WP_012128720.1">
    <property type="nucleotide sequence ID" value="NC_022269.1"/>
</dbReference>
<dbReference type="SMR" id="Q9RFV8"/>
<dbReference type="KEGG" id="vha:VIBHAR_03272"/>
<dbReference type="PATRIC" id="fig|338187.25.peg.2920"/>
<dbReference type="Proteomes" id="UP000008152">
    <property type="component" value="Chromosome I"/>
</dbReference>
<dbReference type="GO" id="GO:0005886">
    <property type="term" value="C:plasma membrane"/>
    <property type="evidence" value="ECO:0007669"/>
    <property type="project" value="UniProtKB-SubCell"/>
</dbReference>
<dbReference type="GO" id="GO:0016655">
    <property type="term" value="F:oxidoreductase activity, acting on NAD(P)H, quinone or similar compound as acceptor"/>
    <property type="evidence" value="ECO:0007669"/>
    <property type="project" value="UniProtKB-UniRule"/>
</dbReference>
<dbReference type="GO" id="GO:0006814">
    <property type="term" value="P:sodium ion transport"/>
    <property type="evidence" value="ECO:0007669"/>
    <property type="project" value="UniProtKB-UniRule"/>
</dbReference>
<dbReference type="HAMAP" id="MF_00428">
    <property type="entry name" value="NqrD"/>
    <property type="match status" value="1"/>
</dbReference>
<dbReference type="InterPro" id="IPR011292">
    <property type="entry name" value="NqrD"/>
</dbReference>
<dbReference type="InterPro" id="IPR003667">
    <property type="entry name" value="NqrDE/RnfAE"/>
</dbReference>
<dbReference type="NCBIfam" id="TIGR01939">
    <property type="entry name" value="nqrD"/>
    <property type="match status" value="1"/>
</dbReference>
<dbReference type="NCBIfam" id="NF006777">
    <property type="entry name" value="PRK09292.1"/>
    <property type="match status" value="1"/>
</dbReference>
<dbReference type="NCBIfam" id="NF009070">
    <property type="entry name" value="PRK12405.1"/>
    <property type="match status" value="1"/>
</dbReference>
<dbReference type="PANTHER" id="PTHR30586">
    <property type="entry name" value="ELECTRON TRANSPORT COMPLEX PROTEIN RNFE"/>
    <property type="match status" value="1"/>
</dbReference>
<dbReference type="PANTHER" id="PTHR30586:SF1">
    <property type="entry name" value="NA(+)-TRANSLOCATING NADH-QUINONE REDUCTASE SUBUNIT D"/>
    <property type="match status" value="1"/>
</dbReference>
<dbReference type="Pfam" id="PF02508">
    <property type="entry name" value="Rnf-Nqr"/>
    <property type="match status" value="1"/>
</dbReference>
<dbReference type="PIRSF" id="PIRSF006102">
    <property type="entry name" value="NQR_DE"/>
    <property type="match status" value="1"/>
</dbReference>
<gene>
    <name evidence="1" type="primary">nqrD</name>
    <name type="ordered locus">VIBHAR_03272</name>
</gene>
<protein>
    <recommendedName>
        <fullName evidence="1">Na(+)-translocating NADH-quinone reductase subunit D</fullName>
        <shortName evidence="1">Na(+)-NQR subunit D</shortName>
        <shortName evidence="1">Na(+)-translocating NQR subunit D</shortName>
        <ecNumber evidence="1">7.2.1.1</ecNumber>
    </recommendedName>
    <alternativeName>
        <fullName evidence="1">NQR complex subunit D</fullName>
    </alternativeName>
    <alternativeName>
        <fullName evidence="1">NQR-1 subunit D</fullName>
    </alternativeName>
</protein>
<feature type="chain" id="PRO_0000214242" description="Na(+)-translocating NADH-quinone reductase subunit D">
    <location>
        <begin position="1"/>
        <end position="210"/>
    </location>
</feature>
<feature type="transmembrane region" description="Helical" evidence="1">
    <location>
        <begin position="42"/>
        <end position="62"/>
    </location>
</feature>
<feature type="transmembrane region" description="Helical" evidence="1">
    <location>
        <begin position="72"/>
        <end position="92"/>
    </location>
</feature>
<feature type="transmembrane region" description="Helical" evidence="1">
    <location>
        <begin position="103"/>
        <end position="123"/>
    </location>
</feature>
<feature type="transmembrane region" description="Helical" evidence="1">
    <location>
        <begin position="131"/>
        <end position="151"/>
    </location>
</feature>
<feature type="transmembrane region" description="Helical" evidence="1">
    <location>
        <begin position="178"/>
        <end position="198"/>
    </location>
</feature>
<name>NQRD_VIBC1</name>
<keyword id="KW-0997">Cell inner membrane</keyword>
<keyword id="KW-1003">Cell membrane</keyword>
<keyword id="KW-0406">Ion transport</keyword>
<keyword id="KW-0472">Membrane</keyword>
<keyword id="KW-0520">NAD</keyword>
<keyword id="KW-0915">Sodium</keyword>
<keyword id="KW-0739">Sodium transport</keyword>
<keyword id="KW-1278">Translocase</keyword>
<keyword id="KW-0812">Transmembrane</keyword>
<keyword id="KW-1133">Transmembrane helix</keyword>
<keyword id="KW-0813">Transport</keyword>
<keyword id="KW-0830">Ubiquinone</keyword>
<proteinExistence type="inferred from homology"/>
<reference key="1">
    <citation type="journal article" date="1999" name="Biochemistry">
        <title>Sequencing and preliminary characterization of the Na+-translocating NADH:ubiquinone oxidoreductase from Vibrio harveyi.</title>
        <authorList>
            <person name="Zhou W."/>
            <person name="Bertsova Y.V."/>
            <person name="Feng B."/>
            <person name="Tsatsos P."/>
            <person name="Verkhovskaya M.L."/>
            <person name="Gennis R.B."/>
            <person name="Bogachev A.V."/>
            <person name="Barquera B."/>
        </authorList>
    </citation>
    <scope>NUCLEOTIDE SEQUENCE [GENOMIC DNA]</scope>
</reference>
<reference key="2">
    <citation type="submission" date="2007-08" db="EMBL/GenBank/DDBJ databases">
        <authorList>
            <consortium name="The Vibrio harveyi Genome Sequencing Project"/>
            <person name="Bassler B."/>
            <person name="Clifton S.W."/>
            <person name="Fulton L."/>
            <person name="Delehaunty K."/>
            <person name="Fronick C."/>
            <person name="Harrison M."/>
            <person name="Markivic C."/>
            <person name="Fulton R."/>
            <person name="Tin-Wollam A.-M."/>
            <person name="Shah N."/>
            <person name="Pepin K."/>
            <person name="Nash W."/>
            <person name="Thiruvilangam P."/>
            <person name="Bhonagiri V."/>
            <person name="Waters C."/>
            <person name="Tu K.C."/>
            <person name="Irgon J."/>
            <person name="Wilson R.K."/>
        </authorList>
    </citation>
    <scope>NUCLEOTIDE SEQUENCE [LARGE SCALE GENOMIC DNA]</scope>
    <source>
        <strain>ATCC BAA-1116 / BB120</strain>
    </source>
</reference>
<sequence>MSSAQNIKKSIMAPVLDNNPIALQVLGVCSALAVTTKLETAFVMTLAVTFVTALSNFSVSLIRNHIPNSVRIIVQMAIIASLVIVVDQVLKAYLYDISKQLSVFVGLIITNCIVMGRAEAFAMKSAPVPSLIDGIGNGLGYGFVLITVGFFRELFGSGKLFGMEVLPLVSNGGWYQPNGLMLLAPSAFFLIGFLIWVIRILKPEQVEAKE</sequence>